<dbReference type="EMBL" id="M14049">
    <property type="protein sequence ID" value="AAA48926.1"/>
    <property type="molecule type" value="mRNA"/>
</dbReference>
<dbReference type="PIR" id="A23947">
    <property type="entry name" value="IJCH3"/>
</dbReference>
<dbReference type="BMRB" id="P07228"/>
<dbReference type="SMR" id="P07228"/>
<dbReference type="FunCoup" id="P07228">
    <property type="interactions" value="2437"/>
</dbReference>
<dbReference type="IntAct" id="P07228">
    <property type="interactions" value="4"/>
</dbReference>
<dbReference type="MINT" id="P07228"/>
<dbReference type="STRING" id="9031.ENSGALP00000054354"/>
<dbReference type="GlyCosmos" id="P07228">
    <property type="glycosylation" value="12 sites, No reported glycans"/>
</dbReference>
<dbReference type="GlyGen" id="P07228">
    <property type="glycosylation" value="12 sites"/>
</dbReference>
<dbReference type="iPTMnet" id="P07228"/>
<dbReference type="PaxDb" id="9031-ENSGALP00000011559"/>
<dbReference type="VEuPathDB" id="HostDB:geneid_374058"/>
<dbReference type="eggNOG" id="KOG1226">
    <property type="taxonomic scope" value="Eukaryota"/>
</dbReference>
<dbReference type="InParanoid" id="P07228"/>
<dbReference type="OrthoDB" id="410592at2759"/>
<dbReference type="PhylomeDB" id="P07228"/>
<dbReference type="Proteomes" id="UP000000539">
    <property type="component" value="Unassembled WGS sequence"/>
</dbReference>
<dbReference type="GO" id="GO:0009986">
    <property type="term" value="C:cell surface"/>
    <property type="evidence" value="ECO:0000250"/>
    <property type="project" value="UniProtKB"/>
</dbReference>
<dbReference type="GO" id="GO:0005925">
    <property type="term" value="C:focal adhesion"/>
    <property type="evidence" value="ECO:0000314"/>
    <property type="project" value="AgBase"/>
</dbReference>
<dbReference type="GO" id="GO:0008305">
    <property type="term" value="C:integrin complex"/>
    <property type="evidence" value="ECO:0000318"/>
    <property type="project" value="GO_Central"/>
</dbReference>
<dbReference type="GO" id="GO:0030027">
    <property type="term" value="C:lamellipodium"/>
    <property type="evidence" value="ECO:0007669"/>
    <property type="project" value="UniProtKB-SubCell"/>
</dbReference>
<dbReference type="GO" id="GO:0042470">
    <property type="term" value="C:melanosome"/>
    <property type="evidence" value="ECO:0007669"/>
    <property type="project" value="UniProtKB-SubCell"/>
</dbReference>
<dbReference type="GO" id="GO:0005886">
    <property type="term" value="C:plasma membrane"/>
    <property type="evidence" value="ECO:0000304"/>
    <property type="project" value="Reactome"/>
</dbReference>
<dbReference type="GO" id="GO:0032587">
    <property type="term" value="C:ruffle membrane"/>
    <property type="evidence" value="ECO:0007669"/>
    <property type="project" value="UniProtKB-SubCell"/>
</dbReference>
<dbReference type="GO" id="GO:0045202">
    <property type="term" value="C:synapse"/>
    <property type="evidence" value="ECO:0000318"/>
    <property type="project" value="GO_Central"/>
</dbReference>
<dbReference type="GO" id="GO:0098639">
    <property type="term" value="F:collagen binding involved in cell-matrix adhesion"/>
    <property type="evidence" value="ECO:0000318"/>
    <property type="project" value="GO_Central"/>
</dbReference>
<dbReference type="GO" id="GO:0001968">
    <property type="term" value="F:fibronectin binding"/>
    <property type="evidence" value="ECO:0000318"/>
    <property type="project" value="GO_Central"/>
</dbReference>
<dbReference type="GO" id="GO:0005178">
    <property type="term" value="F:integrin binding"/>
    <property type="evidence" value="ECO:0000318"/>
    <property type="project" value="GO_Central"/>
</dbReference>
<dbReference type="GO" id="GO:0046872">
    <property type="term" value="F:metal ion binding"/>
    <property type="evidence" value="ECO:0007669"/>
    <property type="project" value="UniProtKB-KW"/>
</dbReference>
<dbReference type="GO" id="GO:0019901">
    <property type="term" value="F:protein kinase binding"/>
    <property type="evidence" value="ECO:0000318"/>
    <property type="project" value="GO_Central"/>
</dbReference>
<dbReference type="GO" id="GO:1990782">
    <property type="term" value="F:protein tyrosine kinase binding"/>
    <property type="evidence" value="ECO:0000353"/>
    <property type="project" value="AgBase"/>
</dbReference>
<dbReference type="GO" id="GO:0033627">
    <property type="term" value="P:cell adhesion mediated by integrin"/>
    <property type="evidence" value="ECO:0000250"/>
    <property type="project" value="UniProtKB"/>
</dbReference>
<dbReference type="GO" id="GO:0016477">
    <property type="term" value="P:cell migration"/>
    <property type="evidence" value="ECO:0000318"/>
    <property type="project" value="GO_Central"/>
</dbReference>
<dbReference type="GO" id="GO:0098609">
    <property type="term" value="P:cell-cell adhesion"/>
    <property type="evidence" value="ECO:0000318"/>
    <property type="project" value="GO_Central"/>
</dbReference>
<dbReference type="GO" id="GO:0007160">
    <property type="term" value="P:cell-matrix adhesion"/>
    <property type="evidence" value="ECO:0000318"/>
    <property type="project" value="GO_Central"/>
</dbReference>
<dbReference type="GO" id="GO:0007229">
    <property type="term" value="P:integrin-mediated signaling pathway"/>
    <property type="evidence" value="ECO:0000318"/>
    <property type="project" value="GO_Central"/>
</dbReference>
<dbReference type="GO" id="GO:0007517">
    <property type="term" value="P:muscle organ development"/>
    <property type="evidence" value="ECO:0007669"/>
    <property type="project" value="UniProtKB-KW"/>
</dbReference>
<dbReference type="GO" id="GO:0045445">
    <property type="term" value="P:myoblast differentiation"/>
    <property type="evidence" value="ECO:0000315"/>
    <property type="project" value="UniProtKB"/>
</dbReference>
<dbReference type="GO" id="GO:0007520">
    <property type="term" value="P:myoblast fusion"/>
    <property type="evidence" value="ECO:0000315"/>
    <property type="project" value="UniProtKB"/>
</dbReference>
<dbReference type="FunFam" id="1.20.5.100:FF:000002">
    <property type="entry name" value="Integrin beta"/>
    <property type="match status" value="1"/>
</dbReference>
<dbReference type="FunFam" id="2.10.25.10:FF:000043">
    <property type="entry name" value="Integrin beta"/>
    <property type="match status" value="1"/>
</dbReference>
<dbReference type="FunFam" id="2.10.25.10:FF:000075">
    <property type="entry name" value="Integrin beta"/>
    <property type="match status" value="1"/>
</dbReference>
<dbReference type="FunFam" id="2.10.25.10:FF:000155">
    <property type="entry name" value="Integrin beta"/>
    <property type="match status" value="1"/>
</dbReference>
<dbReference type="FunFam" id="2.60.40.1510:FF:000003">
    <property type="entry name" value="Integrin beta"/>
    <property type="match status" value="1"/>
</dbReference>
<dbReference type="FunFam" id="3.30.1680.10:FF:000005">
    <property type="entry name" value="Integrin beta"/>
    <property type="match status" value="1"/>
</dbReference>
<dbReference type="FunFam" id="3.40.50.410:FF:000002">
    <property type="entry name" value="Integrin beta"/>
    <property type="match status" value="1"/>
</dbReference>
<dbReference type="FunFam" id="4.10.1240.30:FF:000002">
    <property type="entry name" value="Integrin beta"/>
    <property type="match status" value="1"/>
</dbReference>
<dbReference type="Gene3D" id="4.10.1240.30">
    <property type="match status" value="1"/>
</dbReference>
<dbReference type="Gene3D" id="1.20.5.100">
    <property type="entry name" value="Cytochrome c1, transmembrane anchor, C-terminal"/>
    <property type="match status" value="1"/>
</dbReference>
<dbReference type="Gene3D" id="2.10.25.10">
    <property type="entry name" value="Laminin"/>
    <property type="match status" value="4"/>
</dbReference>
<dbReference type="Gene3D" id="3.30.1680.10">
    <property type="entry name" value="ligand-binding face of the semaphorins, domain 2"/>
    <property type="match status" value="1"/>
</dbReference>
<dbReference type="Gene3D" id="2.60.40.1510">
    <property type="entry name" value="ntegrin, alpha v. Chain A, domain 3"/>
    <property type="match status" value="1"/>
</dbReference>
<dbReference type="Gene3D" id="3.40.50.410">
    <property type="entry name" value="von Willebrand factor, type A domain"/>
    <property type="match status" value="1"/>
</dbReference>
<dbReference type="InterPro" id="IPR013111">
    <property type="entry name" value="EGF_extracell"/>
</dbReference>
<dbReference type="InterPro" id="IPR040622">
    <property type="entry name" value="I-EGF_1"/>
</dbReference>
<dbReference type="InterPro" id="IPR033760">
    <property type="entry name" value="Integrin_beta_N"/>
</dbReference>
<dbReference type="InterPro" id="IPR015812">
    <property type="entry name" value="Integrin_bsu"/>
</dbReference>
<dbReference type="InterPro" id="IPR014836">
    <property type="entry name" value="Integrin_bsu_cyt_dom"/>
</dbReference>
<dbReference type="InterPro" id="IPR012896">
    <property type="entry name" value="Integrin_bsu_tail"/>
</dbReference>
<dbReference type="InterPro" id="IPR036349">
    <property type="entry name" value="Integrin_bsu_tail_dom_sf"/>
</dbReference>
<dbReference type="InterPro" id="IPR002369">
    <property type="entry name" value="Integrin_bsu_VWA"/>
</dbReference>
<dbReference type="InterPro" id="IPR032695">
    <property type="entry name" value="Integrin_dom_sf"/>
</dbReference>
<dbReference type="InterPro" id="IPR016201">
    <property type="entry name" value="PSI"/>
</dbReference>
<dbReference type="InterPro" id="IPR036465">
    <property type="entry name" value="vWFA_dom_sf"/>
</dbReference>
<dbReference type="PANTHER" id="PTHR10082">
    <property type="entry name" value="INTEGRIN BETA SUBUNIT"/>
    <property type="match status" value="1"/>
</dbReference>
<dbReference type="PANTHER" id="PTHR10082:SF28">
    <property type="entry name" value="INTEGRIN BETA-1"/>
    <property type="match status" value="1"/>
</dbReference>
<dbReference type="Pfam" id="PF07974">
    <property type="entry name" value="EGF_2"/>
    <property type="match status" value="1"/>
</dbReference>
<dbReference type="Pfam" id="PF23105">
    <property type="entry name" value="EGF_integrin"/>
    <property type="match status" value="1"/>
</dbReference>
<dbReference type="Pfam" id="PF18372">
    <property type="entry name" value="I-EGF_1"/>
    <property type="match status" value="1"/>
</dbReference>
<dbReference type="Pfam" id="PF08725">
    <property type="entry name" value="Integrin_b_cyt"/>
    <property type="match status" value="1"/>
</dbReference>
<dbReference type="Pfam" id="PF07965">
    <property type="entry name" value="Integrin_B_tail"/>
    <property type="match status" value="1"/>
</dbReference>
<dbReference type="Pfam" id="PF00362">
    <property type="entry name" value="Integrin_beta"/>
    <property type="match status" value="1"/>
</dbReference>
<dbReference type="Pfam" id="PF17205">
    <property type="entry name" value="PSI_integrin"/>
    <property type="match status" value="1"/>
</dbReference>
<dbReference type="PIRSF" id="PIRSF002512">
    <property type="entry name" value="Integrin_B"/>
    <property type="match status" value="1"/>
</dbReference>
<dbReference type="PRINTS" id="PR01186">
    <property type="entry name" value="INTEGRINB"/>
</dbReference>
<dbReference type="SMART" id="SM00187">
    <property type="entry name" value="INB"/>
    <property type="match status" value="1"/>
</dbReference>
<dbReference type="SMART" id="SM01241">
    <property type="entry name" value="Integrin_b_cyt"/>
    <property type="match status" value="1"/>
</dbReference>
<dbReference type="SMART" id="SM01242">
    <property type="entry name" value="Integrin_B_tail"/>
    <property type="match status" value="1"/>
</dbReference>
<dbReference type="SMART" id="SM00423">
    <property type="entry name" value="PSI"/>
    <property type="match status" value="1"/>
</dbReference>
<dbReference type="SUPFAM" id="SSF57196">
    <property type="entry name" value="EGF/Laminin"/>
    <property type="match status" value="2"/>
</dbReference>
<dbReference type="SUPFAM" id="SSF69687">
    <property type="entry name" value="Integrin beta tail domain"/>
    <property type="match status" value="1"/>
</dbReference>
<dbReference type="SUPFAM" id="SSF69179">
    <property type="entry name" value="Integrin domains"/>
    <property type="match status" value="1"/>
</dbReference>
<dbReference type="SUPFAM" id="SSF103575">
    <property type="entry name" value="Plexin repeat"/>
    <property type="match status" value="1"/>
</dbReference>
<dbReference type="SUPFAM" id="SSF53300">
    <property type="entry name" value="vWA-like"/>
    <property type="match status" value="1"/>
</dbReference>
<dbReference type="PROSITE" id="PS00022">
    <property type="entry name" value="EGF_1"/>
    <property type="match status" value="2"/>
</dbReference>
<dbReference type="PROSITE" id="PS00243">
    <property type="entry name" value="I_EGF_1"/>
    <property type="match status" value="3"/>
</dbReference>
<dbReference type="PROSITE" id="PS52047">
    <property type="entry name" value="I_EGF_2"/>
    <property type="match status" value="4"/>
</dbReference>
<sequence length="803" mass="88554">MAETNLTLLTWAGILCCLIWSGSAQQGGSDCIKANAKSCGECIQAGPNCGWCKKTDFLQEGEPTSARCDDLAALKSKGCPEQDIENPRGSKRVLEDREVTNRKIGAAEKLKPEAITQIQPQKLVLQLRVGEPQTFSLKFKRAEDYPIDLYYLMDLSYSMKDDLENVKSLGTALMREMEKITSDFRIGFGSFVEKTVMPYISTTPAKLRNPCTGDQNCTSPFSYKNVLSLTSEGNKFNELVGKQHISGNLDSPEGGFDAIMQVAVCGDQIGWRNVTRLLVFSTDAGFHFAGDGKLGGIVLPNDGKCHLENNMYTMSHYYDYPSIAHLVQKLSENNIQTIFAVTEEFQAVYKELKNLIPKSAVGTLSSNSSNVIQLIIDAYNSLSSEVILENSKLPKEVTISYKSYCKNGVNDTQEDGRKCSNISIGDEVRFEINVTANECPKKGQNETIKIKPLGFTEEVEIHLQFICDCLCQSEGEPNSPACHDGNGTFECGACRCNEGRIGRLCECSTDEVNSEDMDAYCRRENSTEICSNNGECICGQCVCKKRENTNEVYSGKYCECDNFNCDRSNGLICGGNGICKCRVCECFPNFTGSACDCSLDTTPCMAGNGQICNGRGTCECGTCNCTDPKFQGPTCEMCQTCLGVCAEHKDCVQCRAFEKGEKKETCSQECMHFNMTRVESRGKLPQPVHPDPLSHCKEKDVGDCWFYFTYSVNSNGEASVHVVETPECPSGPDIIPIVAGVVAGIVLIGLALLLIWKLLMIIHDRREFAKFEKEKMNAKWDTGENPIYKSAVTTVVNPKYEGK</sequence>
<accession>P07228</accession>
<protein>
    <recommendedName>
        <fullName>Integrin beta-1</fullName>
    </recommendedName>
    <alternativeName>
        <fullName>CSAT antigen</fullName>
    </alternativeName>
    <alternativeName>
        <fullName>JG22 antigen</fullName>
    </alternativeName>
    <alternativeName>
        <fullName>RGD-receptor</fullName>
    </alternativeName>
</protein>
<name>ITB1_CHICK</name>
<evidence type="ECO:0000250" key="1"/>
<evidence type="ECO:0000250" key="2">
    <source>
        <dbReference type="UniProtKB" id="P05106"/>
    </source>
</evidence>
<evidence type="ECO:0000250" key="3">
    <source>
        <dbReference type="UniProtKB" id="P05556"/>
    </source>
</evidence>
<evidence type="ECO:0000250" key="4">
    <source>
        <dbReference type="UniProtKB" id="P09055"/>
    </source>
</evidence>
<evidence type="ECO:0000255" key="5"/>
<evidence type="ECO:0000255" key="6">
    <source>
        <dbReference type="PROSITE-ProRule" id="PRU01392"/>
    </source>
</evidence>
<evidence type="ECO:0000269" key="7">
    <source>
    </source>
</evidence>
<evidence type="ECO:0000269" key="8">
    <source>
    </source>
</evidence>
<evidence type="ECO:0000305" key="9"/>
<feature type="signal peptide" evidence="1">
    <location>
        <begin position="1"/>
        <end position="24"/>
    </location>
</feature>
<feature type="chain" id="PRO_0000016337" description="Integrin beta-1">
    <location>
        <begin position="25"/>
        <end position="803"/>
    </location>
</feature>
<feature type="topological domain" description="Extracellular" evidence="5">
    <location>
        <begin position="25"/>
        <end position="733"/>
    </location>
</feature>
<feature type="transmembrane region" description="Helical" evidence="5">
    <location>
        <begin position="734"/>
        <end position="756"/>
    </location>
</feature>
<feature type="topological domain" description="Cytoplasmic" evidence="5">
    <location>
        <begin position="757"/>
        <end position="803"/>
    </location>
</feature>
<feature type="domain" description="PSI" evidence="5">
    <location>
        <begin position="30"/>
        <end position="80"/>
    </location>
</feature>
<feature type="domain" description="VWFA" evidence="2">
    <location>
        <begin position="144"/>
        <end position="382"/>
    </location>
</feature>
<feature type="domain" description="I-EGF 1" evidence="6">
    <location>
        <begin position="471"/>
        <end position="506"/>
    </location>
</feature>
<feature type="domain" description="I-EGF 2" evidence="6">
    <location>
        <begin position="507"/>
        <end position="559"/>
    </location>
</feature>
<feature type="domain" description="I-EGF 3" evidence="6">
    <location>
        <begin position="560"/>
        <end position="596"/>
    </location>
</feature>
<feature type="domain" description="I-EGF 4" evidence="6">
    <location>
        <begin position="597"/>
        <end position="636"/>
    </location>
</feature>
<feature type="region of interest" description="CX3CL1-binding" evidence="3">
    <location>
        <begin position="211"/>
        <end position="217"/>
    </location>
</feature>
<feature type="region of interest" description="CX3CL1-binding" evidence="3">
    <location>
        <begin position="299"/>
        <end position="318"/>
    </location>
</feature>
<feature type="region of interest" description="Interaction with TMEM182" evidence="7">
    <location>
        <begin position="387"/>
        <end position="470"/>
    </location>
</feature>
<feature type="binding site" description="in MIDAS binding site" evidence="3">
    <location>
        <position position="156"/>
    </location>
    <ligand>
        <name>Mg(2+)</name>
        <dbReference type="ChEBI" id="CHEBI:18420"/>
    </ligand>
</feature>
<feature type="binding site" description="in ADMIDAS binding site" evidence="3">
    <location>
        <position position="158"/>
    </location>
    <ligand>
        <name>Ca(2+)</name>
        <dbReference type="ChEBI" id="CHEBI:29108"/>
        <label>1</label>
    </ligand>
</feature>
<feature type="binding site" description="in MIDAS binding site" evidence="3">
    <location>
        <position position="158"/>
    </location>
    <ligand>
        <name>Mg(2+)</name>
        <dbReference type="ChEBI" id="CHEBI:18420"/>
    </ligand>
</feature>
<feature type="binding site" description="in ADMIDAS binding site" evidence="3">
    <location>
        <position position="161"/>
    </location>
    <ligand>
        <name>Ca(2+)</name>
        <dbReference type="ChEBI" id="CHEBI:29108"/>
        <label>1</label>
    </ligand>
</feature>
<feature type="binding site" description="in ADMIDAS binding site" evidence="3">
    <location>
        <position position="162"/>
    </location>
    <ligand>
        <name>Ca(2+)</name>
        <dbReference type="ChEBI" id="CHEBI:29108"/>
        <label>1</label>
    </ligand>
</feature>
<feature type="binding site" description="in LIMBS binding site" evidence="3">
    <location>
        <position position="193"/>
    </location>
    <ligand>
        <name>Ca(2+)</name>
        <dbReference type="ChEBI" id="CHEBI:29108"/>
        <label>2</label>
    </ligand>
</feature>
<feature type="binding site" description="in LIMBS binding site" evidence="3">
    <location>
        <position position="248"/>
    </location>
    <ligand>
        <name>Ca(2+)</name>
        <dbReference type="ChEBI" id="CHEBI:29108"/>
        <label>2</label>
    </ligand>
</feature>
<feature type="binding site" description="in LIMBS binding site" evidence="3">
    <location>
        <position position="250"/>
    </location>
    <ligand>
        <name>Ca(2+)</name>
        <dbReference type="ChEBI" id="CHEBI:29108"/>
        <label>2</label>
    </ligand>
</feature>
<feature type="binding site" description="in LIMBS binding site" evidence="3">
    <location>
        <position position="252"/>
    </location>
    <ligand>
        <name>Ca(2+)</name>
        <dbReference type="ChEBI" id="CHEBI:29108"/>
        <label>2</label>
    </ligand>
</feature>
<feature type="binding site" description="in LIMBS binding site" evidence="3">
    <location>
        <position position="253"/>
    </location>
    <ligand>
        <name>Ca(2+)</name>
        <dbReference type="ChEBI" id="CHEBI:29108"/>
        <label>2</label>
    </ligand>
</feature>
<feature type="binding site" description="in MIDAS binding site" evidence="3">
    <location>
        <position position="253"/>
    </location>
    <ligand>
        <name>Mg(2+)</name>
        <dbReference type="ChEBI" id="CHEBI:18420"/>
    </ligand>
</feature>
<feature type="modified residue" description="Blocked amino end (Gln)">
    <location>
        <position position="25"/>
    </location>
</feature>
<feature type="modified residue" description="Phosphotyrosine; by Tyr-kinases" evidence="5">
    <location>
        <position position="788"/>
    </location>
</feature>
<feature type="glycosylation site" description="N-linked (GlcNAc...) asparagine" evidence="5">
    <location>
        <position position="216"/>
    </location>
</feature>
<feature type="glycosylation site" description="N-linked (GlcNAc...) asparagine" evidence="5">
    <location>
        <position position="273"/>
    </location>
</feature>
<feature type="glycosylation site" description="N-linked (GlcNAc...) asparagine" evidence="5">
    <location>
        <position position="367"/>
    </location>
</feature>
<feature type="glycosylation site" description="N-linked (GlcNAc...) asparagine" evidence="5">
    <location>
        <position position="410"/>
    </location>
</feature>
<feature type="glycosylation site" description="N-linked (GlcNAc...) asparagine" evidence="5">
    <location>
        <position position="421"/>
    </location>
</feature>
<feature type="glycosylation site" description="N-linked (GlcNAc...) asparagine" evidence="5">
    <location>
        <position position="433"/>
    </location>
</feature>
<feature type="glycosylation site" description="N-linked (GlcNAc...) asparagine" evidence="5">
    <location>
        <position position="445"/>
    </location>
</feature>
<feature type="glycosylation site" description="N-linked (GlcNAc...) asparagine" evidence="5">
    <location>
        <position position="486"/>
    </location>
</feature>
<feature type="glycosylation site" description="N-linked (GlcNAc...) asparagine" evidence="5">
    <location>
        <position position="525"/>
    </location>
</feature>
<feature type="glycosylation site" description="N-linked (GlcNAc...) asparagine" evidence="5">
    <location>
        <position position="589"/>
    </location>
</feature>
<feature type="glycosylation site" description="N-linked (GlcNAc...) asparagine" evidence="5">
    <location>
        <position position="624"/>
    </location>
</feature>
<feature type="glycosylation site" description="N-linked (GlcNAc...) asparagine" evidence="5">
    <location>
        <position position="674"/>
    </location>
</feature>
<feature type="disulfide bond" evidence="3">
    <location>
        <begin position="31"/>
        <end position="49"/>
    </location>
</feature>
<feature type="disulfide bond" evidence="3">
    <location>
        <begin position="39"/>
        <end position="469"/>
    </location>
</feature>
<feature type="disulfide bond" evidence="3">
    <location>
        <begin position="42"/>
        <end position="68"/>
    </location>
</feature>
<feature type="disulfide bond" evidence="3">
    <location>
        <begin position="52"/>
        <end position="79"/>
    </location>
</feature>
<feature type="disulfide bond" evidence="3">
    <location>
        <begin position="211"/>
        <end position="217"/>
    </location>
</feature>
<feature type="disulfide bond" evidence="3">
    <location>
        <begin position="265"/>
        <end position="305"/>
    </location>
</feature>
<feature type="disulfide bond" evidence="3">
    <location>
        <begin position="405"/>
        <end position="419"/>
    </location>
</feature>
<feature type="disulfide bond" evidence="3">
    <location>
        <begin position="439"/>
        <end position="467"/>
    </location>
</feature>
<feature type="disulfide bond" evidence="6">
    <location>
        <begin position="471"/>
        <end position="491"/>
    </location>
</feature>
<feature type="disulfide bond" evidence="6">
    <location>
        <begin position="482"/>
        <end position="494"/>
    </location>
</feature>
<feature type="disulfide bond" evidence="6">
    <location>
        <begin position="496"/>
        <end position="505"/>
    </location>
</feature>
<feature type="disulfide bond" evidence="6">
    <location>
        <begin position="507"/>
        <end position="538"/>
    </location>
</feature>
<feature type="disulfide bond" evidence="6">
    <location>
        <begin position="521"/>
        <end position="536"/>
    </location>
</feature>
<feature type="disulfide bond" evidence="6">
    <location>
        <begin position="530"/>
        <end position="541"/>
    </location>
</feature>
<feature type="disulfide bond" evidence="6">
    <location>
        <begin position="543"/>
        <end position="558"/>
    </location>
</feature>
<feature type="disulfide bond" evidence="6">
    <location>
        <begin position="560"/>
        <end position="581"/>
    </location>
</feature>
<feature type="disulfide bond" evidence="6">
    <location>
        <begin position="565"/>
        <end position="579"/>
    </location>
</feature>
<feature type="disulfide bond" evidence="6">
    <location>
        <begin position="573"/>
        <end position="584"/>
    </location>
</feature>
<feature type="disulfide bond" evidence="6">
    <location>
        <begin position="586"/>
        <end position="595"/>
    </location>
</feature>
<feature type="disulfide bond" evidence="6">
    <location>
        <begin position="597"/>
        <end position="620"/>
    </location>
</feature>
<feature type="disulfide bond" evidence="6">
    <location>
        <begin position="604"/>
        <end position="618"/>
    </location>
</feature>
<feature type="disulfide bond" evidence="6">
    <location>
        <begin position="612"/>
        <end position="623"/>
    </location>
</feature>
<feature type="disulfide bond" evidence="6">
    <location>
        <begin position="625"/>
        <end position="635"/>
    </location>
</feature>
<feature type="disulfide bond" evidence="3">
    <location>
        <begin position="638"/>
        <end position="641"/>
    </location>
</feature>
<feature type="disulfide bond" evidence="3">
    <location>
        <begin position="645"/>
        <end position="696"/>
    </location>
</feature>
<feature type="disulfide bond" evidence="3">
    <location>
        <begin position="651"/>
        <end position="670"/>
    </location>
</feature>
<feature type="disulfide bond" evidence="3">
    <location>
        <begin position="654"/>
        <end position="666"/>
    </location>
</feature>
<feature type="disulfide bond" evidence="3">
    <location>
        <begin position="704"/>
        <end position="728"/>
    </location>
</feature>
<keyword id="KW-0106">Calcium</keyword>
<keyword id="KW-0130">Cell adhesion</keyword>
<keyword id="KW-0965">Cell junction</keyword>
<keyword id="KW-1003">Cell membrane</keyword>
<keyword id="KW-0966">Cell projection</keyword>
<keyword id="KW-1015">Disulfide bond</keyword>
<keyword id="KW-0245">EGF-like domain</keyword>
<keyword id="KW-0325">Glycoprotein</keyword>
<keyword id="KW-0401">Integrin</keyword>
<keyword id="KW-0460">Magnesium</keyword>
<keyword id="KW-0472">Membrane</keyword>
<keyword id="KW-0479">Metal-binding</keyword>
<keyword id="KW-0517">Myogenesis</keyword>
<keyword id="KW-0597">Phosphoprotein</keyword>
<keyword id="KW-0675">Receptor</keyword>
<keyword id="KW-1185">Reference proteome</keyword>
<keyword id="KW-0677">Repeat</keyword>
<keyword id="KW-0732">Signal</keyword>
<keyword id="KW-0812">Transmembrane</keyword>
<keyword id="KW-1133">Transmembrane helix</keyword>
<comment type="function">
    <text evidence="3 4">Integrins alpha-1/beta-1, alpha-2/beta-1, alpha-10/beta-1 and alpha-11/beta-1 are receptors for collagen. Integrins alpha-1/beta-1 and alpha-2/beta-1 recognize the proline-hydroxylated sequence G-F-P-G-E-R in collagen. Integrins alpha-2/beta-1, alpha-3/beta-1, alpha-4/beta-1, alpha-5/beta-1, alpha-8/beta-1, alpha-10/beta-1, alpha-11/beta-1 and alpha-V/beta-1 are receptors for fibronectin. Alpha-4/beta-1 recognizes one or more domains within the alternatively spliced CS-1 and CS-5 regions of fibronectin. Integrin alpha-5/beta-1 is a receptor for fibrinogen. Integrin alpha-1/beta-1, alpha-2/beta-1, alpha-6/beta-1 and alpha-7/beta-1 are receptors for lamimin. Integrin alpha-6/beta-1 (ITGA6:ITGB1) is present in oocytes and is involved in sperm-egg fusion (By similarity). Integrin alpha-4/beta-1 is a receptor for VCAM1 and recognizes the sequence Q-I-D-S in VCAM1. Integrin alpha-9/beta-1 is a receptor for VCAM1, cytotactin and osteopontin. It recognizes the sequence A-E-I-D-G-I-E-L in cytotactin. Integrin alpha-3/beta-1 is a receptor for epiligrin, thrombospondin and CSPG4. Integrin alpha-3/beta-1 provides a docking site for FAP (seprase) at invadopodia plasma membranes in a collagen-dependent manner and hence may participate in the adhesion, formation of invadopodia and matrix degradation processes, promoting cell invasion. Alpha-3/beta-1 may mediate with LGALS3 the stimulation by CSPG4 of endothelial cells migration. Integrin alpha-V/beta-1 is a receptor for vitronectin. Beta-1 integrins recognize the sequence R-G-D in a wide array of ligands. When associated with alpha-7/beta-1 integrin, regulates cell adhesion and laminin matrix deposition. Involved in promoting endothelial cell motility and angiogenesis. Involved in osteoblast compaction through the fibronectin fibrillogenesis cell-mediated matrix assembly process and the formation of mineralized bone nodules. May be involved in up-regulation of the activity of kinases such as PKC via binding to KRT1. Together with KRT1 and RACK1, serves as a platform for SRC activation or inactivation. ITGA4:ITGB1 binds to fractalkine (CX3CL1) and may act as its coreceptor in CX3CR1-dependent fractalkine signaling. ITGA4:ITGB1 and ITGA5:ITGB1 bind to PLA2G2A via a site (site 2) which is distinct from the classical ligand-binding site (site 1) and this induces integrin conformational changes and enhanced ligand binding to site 1. ITGA5:ITGB1 acts as a receptor for fibrillin-1 (FBN1) and mediates R-G-D-dependent cell adhesion to FBN1. ITGA5:ITGB1 acts as a receptor for fibronectin FN1 and mediates R-G-D-dependent cell adhesion to FN1 (By similarity). ITGA5:ITGB1 is a receptor for IL1B and binding is essential for IL1B signaling. ITGA5:ITGB3 is a receptor for soluble CD40LG and is required for CD40/CD40LG signaling (By similarity). Plays an important role in myoblast differentiation and fusion during skeletal myogenesis (PubMed:34427057).</text>
</comment>
<comment type="subunit">
    <text evidence="3 7">Heterodimer of an alpha and a beta subunit. Beta-1 associates with either alpha-1, alpha-2, alpha-3, alpha-4, alpha-5, alpha-6, alpha-7, alpha-8, alpha-9, alpha-10, alpha-11 or alpha-V (By similarity). Interacts with TMEM182 and LAMB1 (PubMed:34427057).</text>
</comment>
<comment type="interaction">
    <interactant intactId="EBI-5606437">
        <id>P07228</id>
    </interactant>
    <interactant intactId="EBI-5847257">
        <id>P05094</id>
        <label>ACTN1</label>
    </interactant>
    <organismsDiffer>false</organismsDiffer>
    <experiments>4</experiments>
</comment>
<comment type="interaction">
    <interactant intactId="EBI-5606437">
        <id>P07228</id>
    </interactant>
    <interactant intactId="EBI-350432">
        <id>P21333</id>
        <label>FLNA</label>
    </interactant>
    <organismsDiffer>true</organismsDiffer>
    <experiments>2</experiments>
</comment>
<comment type="subcellular location">
    <subcellularLocation>
        <location evidence="3">Cell membrane</location>
        <topology evidence="5">Single-pass type I membrane protein</topology>
    </subcellularLocation>
    <subcellularLocation>
        <location evidence="3">Cell projection</location>
        <location evidence="3">Invadopodium membrane</location>
        <topology evidence="5">Single-pass type I membrane protein</topology>
    </subcellularLocation>
    <subcellularLocation>
        <location evidence="3">Cell projection</location>
        <location evidence="3">Ruffle membrane</location>
        <topology evidence="5">Single-pass type I membrane protein</topology>
    </subcellularLocation>
    <subcellularLocation>
        <location evidence="3">Melanosome</location>
    </subcellularLocation>
    <subcellularLocation>
        <location evidence="3">Cell projection</location>
        <location evidence="3">Lamellipodium</location>
    </subcellularLocation>
    <subcellularLocation>
        <location evidence="3">Cell projection</location>
        <location evidence="3">Ruffle</location>
    </subcellularLocation>
    <subcellularLocation>
        <location evidence="3">Cell junction</location>
        <location evidence="3">Focal adhesion</location>
    </subcellularLocation>
</comment>
<comment type="tissue specificity">
    <text evidence="8">Expressed on surface of embryonic fibroblasts (at protein level).</text>
</comment>
<comment type="domain">
    <text evidence="3">The VWFA domain (or beta I domain) contains three cation-binding sites: the ligand-associated metal ion-binding site (LIMBS or SyMBS), the metal ion-dependent adhesion site (MIDAS), and the adjacent MIDAS site (ADMIDAS). This domain is also part of the ligand-binding site.</text>
</comment>
<comment type="similarity">
    <text evidence="9">Belongs to the integrin beta chain family.</text>
</comment>
<organism>
    <name type="scientific">Gallus gallus</name>
    <name type="common">Chicken</name>
    <dbReference type="NCBI Taxonomy" id="9031"/>
    <lineage>
        <taxon>Eukaryota</taxon>
        <taxon>Metazoa</taxon>
        <taxon>Chordata</taxon>
        <taxon>Craniata</taxon>
        <taxon>Vertebrata</taxon>
        <taxon>Euteleostomi</taxon>
        <taxon>Archelosauria</taxon>
        <taxon>Archosauria</taxon>
        <taxon>Dinosauria</taxon>
        <taxon>Saurischia</taxon>
        <taxon>Theropoda</taxon>
        <taxon>Coelurosauria</taxon>
        <taxon>Aves</taxon>
        <taxon>Neognathae</taxon>
        <taxon>Galloanserae</taxon>
        <taxon>Galliformes</taxon>
        <taxon>Phasianidae</taxon>
        <taxon>Phasianinae</taxon>
        <taxon>Gallus</taxon>
    </lineage>
</organism>
<reference key="1">
    <citation type="journal article" date="1986" name="Cell">
        <title>Structure of integrin, a glycoprotein involved in the transmembrane linkage between fibronectin and actin.</title>
        <authorList>
            <person name="Tamkun J.W."/>
            <person name="Desimone D.W."/>
            <person name="Fonda D."/>
            <person name="Patel R.S."/>
            <person name="Buck C."/>
            <person name="Horwitz A.F."/>
            <person name="Hynes R.O."/>
        </authorList>
    </citation>
    <scope>NUCLEOTIDE SEQUENCE [MRNA]</scope>
    <scope>TISSUE SPECIFICITY</scope>
    <source>
        <tissue>Embryonic fibroblast</tissue>
    </source>
</reference>
<reference key="2">
    <citation type="journal article" date="2021" name="J. Cachexia Sarcopenia Muscle">
        <title>TMEM182 interacts with integrin beta 1 and regulates myoblast differentiation and muscle regeneration.</title>
        <authorList>
            <person name="Luo W."/>
            <person name="Lin Z."/>
            <person name="Chen J."/>
            <person name="Chen G."/>
            <person name="Zhang S."/>
            <person name="Liu M."/>
            <person name="Li H."/>
            <person name="He D."/>
            <person name="Liang S."/>
            <person name="Luo Q."/>
            <person name="Zhang D."/>
            <person name="Nie Q."/>
            <person name="Zhang X."/>
        </authorList>
    </citation>
    <scope>FUNCTION</scope>
    <scope>INTERACTION WITH TMEM182 AND LAMB1</scope>
</reference>
<proteinExistence type="evidence at protein level"/>
<gene>
    <name type="primary">ITGB1</name>
</gene>